<reference key="1">
    <citation type="journal article" date="2002" name="Nucleic Acids Res.">
        <title>Genome sequence of Shigella flexneri 2a: insights into pathogenicity through comparison with genomes of Escherichia coli K12 and O157.</title>
        <authorList>
            <person name="Jin Q."/>
            <person name="Yuan Z."/>
            <person name="Xu J."/>
            <person name="Wang Y."/>
            <person name="Shen Y."/>
            <person name="Lu W."/>
            <person name="Wang J."/>
            <person name="Liu H."/>
            <person name="Yang J."/>
            <person name="Yang F."/>
            <person name="Zhang X."/>
            <person name="Zhang J."/>
            <person name="Yang G."/>
            <person name="Wu H."/>
            <person name="Qu D."/>
            <person name="Dong J."/>
            <person name="Sun L."/>
            <person name="Xue Y."/>
            <person name="Zhao A."/>
            <person name="Gao Y."/>
            <person name="Zhu J."/>
            <person name="Kan B."/>
            <person name="Ding K."/>
            <person name="Chen S."/>
            <person name="Cheng H."/>
            <person name="Yao Z."/>
            <person name="He B."/>
            <person name="Chen R."/>
            <person name="Ma D."/>
            <person name="Qiang B."/>
            <person name="Wen Y."/>
            <person name="Hou Y."/>
            <person name="Yu J."/>
        </authorList>
    </citation>
    <scope>NUCLEOTIDE SEQUENCE [LARGE SCALE GENOMIC DNA]</scope>
    <source>
        <strain>301 / Serotype 2a</strain>
    </source>
</reference>
<reference key="2">
    <citation type="journal article" date="2003" name="Infect. Immun.">
        <title>Complete genome sequence and comparative genomics of Shigella flexneri serotype 2a strain 2457T.</title>
        <authorList>
            <person name="Wei J."/>
            <person name="Goldberg M.B."/>
            <person name="Burland V."/>
            <person name="Venkatesan M.M."/>
            <person name="Deng W."/>
            <person name="Fournier G."/>
            <person name="Mayhew G.F."/>
            <person name="Plunkett G. III"/>
            <person name="Rose D.J."/>
            <person name="Darling A."/>
            <person name="Mau B."/>
            <person name="Perna N.T."/>
            <person name="Payne S.M."/>
            <person name="Runyen-Janecky L.J."/>
            <person name="Zhou S."/>
            <person name="Schwartz D.C."/>
            <person name="Blattner F.R."/>
        </authorList>
    </citation>
    <scope>NUCLEOTIDE SEQUENCE [LARGE SCALE GENOMIC DNA]</scope>
    <source>
        <strain>ATCC 700930 / 2457T / Serotype 2a</strain>
    </source>
</reference>
<comment type="function">
    <text evidence="1">Hydrolyzes cytidine or uridine to ribose and cytosine or uracil, respectively. Has a clear preference for cytidine over uridine. Strictly specific for ribonucleosides.</text>
</comment>
<comment type="catalytic activity">
    <reaction evidence="1">
        <text>a pyrimidine ribonucleoside + H2O = a pyrimidine nucleobase + D-ribose</text>
        <dbReference type="Rhea" id="RHEA:56816"/>
        <dbReference type="ChEBI" id="CHEBI:15377"/>
        <dbReference type="ChEBI" id="CHEBI:26432"/>
        <dbReference type="ChEBI" id="CHEBI:47013"/>
        <dbReference type="ChEBI" id="CHEBI:141014"/>
        <dbReference type="EC" id="3.2.2.8"/>
    </reaction>
</comment>
<comment type="cofactor">
    <cofactor evidence="1">
        <name>Ca(2+)</name>
        <dbReference type="ChEBI" id="CHEBI:29108"/>
    </cofactor>
    <text evidence="1">Binds 1 Ca(2+) ion per monomer.</text>
</comment>
<comment type="subunit">
    <text evidence="1">Homotetramer.</text>
</comment>
<comment type="similarity">
    <text evidence="1">Belongs to the IUNH family. RihB subfamily.</text>
</comment>
<proteinExistence type="inferred from homology"/>
<keyword id="KW-0106">Calcium</keyword>
<keyword id="KW-0326">Glycosidase</keyword>
<keyword id="KW-0378">Hydrolase</keyword>
<keyword id="KW-0479">Metal-binding</keyword>
<keyword id="KW-1185">Reference proteome</keyword>
<evidence type="ECO:0000255" key="1">
    <source>
        <dbReference type="HAMAP-Rule" id="MF_01433"/>
    </source>
</evidence>
<feature type="chain" id="PRO_0000206829" description="Pyrimidine-specific ribonucleoside hydrolase RihB">
    <location>
        <begin position="1"/>
        <end position="313"/>
    </location>
</feature>
<feature type="active site" description="Proton acceptor" evidence="1">
    <location>
        <position position="11"/>
    </location>
</feature>
<feature type="binding site" evidence="1">
    <location>
        <position position="11"/>
    </location>
    <ligand>
        <name>Ca(2+)</name>
        <dbReference type="ChEBI" id="CHEBI:29108"/>
    </ligand>
</feature>
<feature type="binding site" evidence="1">
    <location>
        <position position="16"/>
    </location>
    <ligand>
        <name>Ca(2+)</name>
        <dbReference type="ChEBI" id="CHEBI:29108"/>
    </ligand>
</feature>
<feature type="binding site" evidence="1">
    <location>
        <position position="124"/>
    </location>
    <ligand>
        <name>Ca(2+)</name>
        <dbReference type="ChEBI" id="CHEBI:29108"/>
    </ligand>
</feature>
<feature type="binding site" evidence="1">
    <location>
        <position position="227"/>
    </location>
    <ligand>
        <name>substrate</name>
    </ligand>
</feature>
<feature type="binding site" evidence="1">
    <location>
        <position position="239"/>
    </location>
    <ligand>
        <name>substrate</name>
    </ligand>
</feature>
<feature type="binding site" evidence="1">
    <location>
        <position position="240"/>
    </location>
    <ligand>
        <name>Ca(2+)</name>
        <dbReference type="ChEBI" id="CHEBI:29108"/>
    </ligand>
</feature>
<gene>
    <name evidence="1" type="primary">rihB</name>
    <name type="ordered locus">SF2247</name>
    <name type="ordered locus">S2376</name>
</gene>
<accession>Q83KF1</accession>
<accession>Q7C0V4</accession>
<protein>
    <recommendedName>
        <fullName evidence="1">Pyrimidine-specific ribonucleoside hydrolase RihB</fullName>
        <ecNumber evidence="1">3.2.2.8</ecNumber>
    </recommendedName>
    <alternativeName>
        <fullName evidence="1">Cytidine/uridine-specific hydrolase</fullName>
    </alternativeName>
</protein>
<dbReference type="EC" id="3.2.2.8" evidence="1"/>
<dbReference type="EMBL" id="AE005674">
    <property type="protein sequence ID" value="AAN43766.1"/>
    <property type="molecule type" value="Genomic_DNA"/>
</dbReference>
<dbReference type="EMBL" id="AE014073">
    <property type="protein sequence ID" value="AAP17583.1"/>
    <property type="molecule type" value="Genomic_DNA"/>
</dbReference>
<dbReference type="RefSeq" id="NP_708059.1">
    <property type="nucleotide sequence ID" value="NC_004337.2"/>
</dbReference>
<dbReference type="RefSeq" id="WP_000415462.1">
    <property type="nucleotide sequence ID" value="NZ_WPGW01000017.1"/>
</dbReference>
<dbReference type="SMR" id="Q83KF1"/>
<dbReference type="STRING" id="198214.SF2247"/>
<dbReference type="PaxDb" id="198214-SF2247"/>
<dbReference type="GeneID" id="1027307"/>
<dbReference type="KEGG" id="sfl:SF2247"/>
<dbReference type="KEGG" id="sfx:S2376"/>
<dbReference type="PATRIC" id="fig|198214.7.peg.2692"/>
<dbReference type="HOGENOM" id="CLU_036838_2_0_6"/>
<dbReference type="Proteomes" id="UP000001006">
    <property type="component" value="Chromosome"/>
</dbReference>
<dbReference type="Proteomes" id="UP000002673">
    <property type="component" value="Chromosome"/>
</dbReference>
<dbReference type="GO" id="GO:0005829">
    <property type="term" value="C:cytosol"/>
    <property type="evidence" value="ECO:0007669"/>
    <property type="project" value="TreeGrafter"/>
</dbReference>
<dbReference type="GO" id="GO:0005509">
    <property type="term" value="F:calcium ion binding"/>
    <property type="evidence" value="ECO:0007669"/>
    <property type="project" value="UniProtKB-UniRule"/>
</dbReference>
<dbReference type="GO" id="GO:0008477">
    <property type="term" value="F:purine nucleosidase activity"/>
    <property type="evidence" value="ECO:0007669"/>
    <property type="project" value="TreeGrafter"/>
</dbReference>
<dbReference type="GO" id="GO:0050263">
    <property type="term" value="F:ribosylpyrimidine nucleosidase activity"/>
    <property type="evidence" value="ECO:0007669"/>
    <property type="project" value="UniProtKB-UniRule"/>
</dbReference>
<dbReference type="GO" id="GO:0006152">
    <property type="term" value="P:purine nucleoside catabolic process"/>
    <property type="evidence" value="ECO:0007669"/>
    <property type="project" value="TreeGrafter"/>
</dbReference>
<dbReference type="GO" id="GO:0006206">
    <property type="term" value="P:pyrimidine nucleobase metabolic process"/>
    <property type="evidence" value="ECO:0007669"/>
    <property type="project" value="UniProtKB-UniRule"/>
</dbReference>
<dbReference type="GO" id="GO:0046133">
    <property type="term" value="P:pyrimidine ribonucleoside catabolic process"/>
    <property type="evidence" value="ECO:0007669"/>
    <property type="project" value="InterPro"/>
</dbReference>
<dbReference type="CDD" id="cd02651">
    <property type="entry name" value="nuc_hydro_IU_UC_XIUA"/>
    <property type="match status" value="1"/>
</dbReference>
<dbReference type="FunFam" id="3.90.245.10:FF:000003">
    <property type="entry name" value="Pyrimidine-specific ribonucleoside hydrolase RihB"/>
    <property type="match status" value="1"/>
</dbReference>
<dbReference type="Gene3D" id="3.90.245.10">
    <property type="entry name" value="Ribonucleoside hydrolase-like"/>
    <property type="match status" value="1"/>
</dbReference>
<dbReference type="HAMAP" id="MF_01433">
    <property type="entry name" value="Pyrim_hydro_RihB"/>
    <property type="match status" value="1"/>
</dbReference>
<dbReference type="InterPro" id="IPR001910">
    <property type="entry name" value="Inosine/uridine_hydrolase_dom"/>
</dbReference>
<dbReference type="InterPro" id="IPR023186">
    <property type="entry name" value="IUNH"/>
</dbReference>
<dbReference type="InterPro" id="IPR022977">
    <property type="entry name" value="Pyrim_hydro_RihB"/>
</dbReference>
<dbReference type="InterPro" id="IPR036452">
    <property type="entry name" value="Ribo_hydro-like"/>
</dbReference>
<dbReference type="NCBIfam" id="NF007417">
    <property type="entry name" value="PRK09955.1"/>
    <property type="match status" value="1"/>
</dbReference>
<dbReference type="PANTHER" id="PTHR12304">
    <property type="entry name" value="INOSINE-URIDINE PREFERRING NUCLEOSIDE HYDROLASE"/>
    <property type="match status" value="1"/>
</dbReference>
<dbReference type="PANTHER" id="PTHR12304:SF4">
    <property type="entry name" value="URIDINE NUCLEOSIDASE"/>
    <property type="match status" value="1"/>
</dbReference>
<dbReference type="Pfam" id="PF01156">
    <property type="entry name" value="IU_nuc_hydro"/>
    <property type="match status" value="1"/>
</dbReference>
<dbReference type="SUPFAM" id="SSF53590">
    <property type="entry name" value="Nucleoside hydrolase"/>
    <property type="match status" value="1"/>
</dbReference>
<organism>
    <name type="scientific">Shigella flexneri</name>
    <dbReference type="NCBI Taxonomy" id="623"/>
    <lineage>
        <taxon>Bacteria</taxon>
        <taxon>Pseudomonadati</taxon>
        <taxon>Pseudomonadota</taxon>
        <taxon>Gammaproteobacteria</taxon>
        <taxon>Enterobacterales</taxon>
        <taxon>Enterobacteriaceae</taxon>
        <taxon>Shigella</taxon>
    </lineage>
</organism>
<sequence>MEKRKIILDCEPGHDDAIAMMMAAKHPAIDLLGITIVAGNQTLDKTLINGLNVCQKLEINVPVYAGMPQPIMRKQIVADNIHGETGLDGPVFEPLTRQAESTHAVKYIIDTLMASDGDITLVPVGPLSNIAVAMRMQPAILPKIREIVLMGGAYGTGNFTPSAEFNIFADPEAARVVFTSGVPLVMMGLDLTNQTVCTPDVIARMERVGGPAGELFSDIMNFTLKTQFEYYGLAGGPVHDATCIGYLINPDGIKTQDMYVEVDVNSGPCYGRTVCDELGVLGKPANTKVGITIDTDWFWGLVEECVRGYIKTH</sequence>
<name>RIHB_SHIFL</name>